<gene>
    <name evidence="1" type="primary">tgt</name>
    <name type="ordered locus">cbdbA68</name>
</gene>
<accession>Q3ZWC1</accession>
<dbReference type="EC" id="2.4.2.29" evidence="1"/>
<dbReference type="EMBL" id="AJ965256">
    <property type="protein sequence ID" value="CAI82330.1"/>
    <property type="molecule type" value="Genomic_DNA"/>
</dbReference>
<dbReference type="RefSeq" id="WP_011308688.1">
    <property type="nucleotide sequence ID" value="NC_007356.1"/>
</dbReference>
<dbReference type="SMR" id="Q3ZWC1"/>
<dbReference type="KEGG" id="deh:cbdbA68"/>
<dbReference type="HOGENOM" id="CLU_022060_0_1_0"/>
<dbReference type="UniPathway" id="UPA00392"/>
<dbReference type="Proteomes" id="UP000000433">
    <property type="component" value="Chromosome"/>
</dbReference>
<dbReference type="GO" id="GO:0005829">
    <property type="term" value="C:cytosol"/>
    <property type="evidence" value="ECO:0007669"/>
    <property type="project" value="TreeGrafter"/>
</dbReference>
<dbReference type="GO" id="GO:0046872">
    <property type="term" value="F:metal ion binding"/>
    <property type="evidence" value="ECO:0007669"/>
    <property type="project" value="UniProtKB-KW"/>
</dbReference>
<dbReference type="GO" id="GO:0008479">
    <property type="term" value="F:tRNA-guanosine(34) queuine transglycosylase activity"/>
    <property type="evidence" value="ECO:0007669"/>
    <property type="project" value="UniProtKB-UniRule"/>
</dbReference>
<dbReference type="GO" id="GO:0008616">
    <property type="term" value="P:queuosine biosynthetic process"/>
    <property type="evidence" value="ECO:0007669"/>
    <property type="project" value="UniProtKB-UniRule"/>
</dbReference>
<dbReference type="GO" id="GO:0002099">
    <property type="term" value="P:tRNA wobble guanine modification"/>
    <property type="evidence" value="ECO:0007669"/>
    <property type="project" value="TreeGrafter"/>
</dbReference>
<dbReference type="GO" id="GO:0101030">
    <property type="term" value="P:tRNA-guanine transglycosylation"/>
    <property type="evidence" value="ECO:0007669"/>
    <property type="project" value="InterPro"/>
</dbReference>
<dbReference type="FunFam" id="3.20.20.105:FF:000001">
    <property type="entry name" value="Queuine tRNA-ribosyltransferase"/>
    <property type="match status" value="1"/>
</dbReference>
<dbReference type="Gene3D" id="3.20.20.105">
    <property type="entry name" value="Queuine tRNA-ribosyltransferase-like"/>
    <property type="match status" value="1"/>
</dbReference>
<dbReference type="HAMAP" id="MF_00168">
    <property type="entry name" value="Q_tRNA_Tgt"/>
    <property type="match status" value="1"/>
</dbReference>
<dbReference type="InterPro" id="IPR050076">
    <property type="entry name" value="ArchSynthase1/Queuine_TRR"/>
</dbReference>
<dbReference type="InterPro" id="IPR004803">
    <property type="entry name" value="TGT"/>
</dbReference>
<dbReference type="InterPro" id="IPR036511">
    <property type="entry name" value="TGT-like_sf"/>
</dbReference>
<dbReference type="InterPro" id="IPR002616">
    <property type="entry name" value="tRNA_ribo_trans-like"/>
</dbReference>
<dbReference type="NCBIfam" id="TIGR00430">
    <property type="entry name" value="Q_tRNA_tgt"/>
    <property type="match status" value="1"/>
</dbReference>
<dbReference type="NCBIfam" id="TIGR00449">
    <property type="entry name" value="tgt_general"/>
    <property type="match status" value="1"/>
</dbReference>
<dbReference type="PANTHER" id="PTHR46499">
    <property type="entry name" value="QUEUINE TRNA-RIBOSYLTRANSFERASE"/>
    <property type="match status" value="1"/>
</dbReference>
<dbReference type="PANTHER" id="PTHR46499:SF1">
    <property type="entry name" value="QUEUINE TRNA-RIBOSYLTRANSFERASE"/>
    <property type="match status" value="1"/>
</dbReference>
<dbReference type="Pfam" id="PF01702">
    <property type="entry name" value="TGT"/>
    <property type="match status" value="1"/>
</dbReference>
<dbReference type="SUPFAM" id="SSF51713">
    <property type="entry name" value="tRNA-guanine transglycosylase"/>
    <property type="match status" value="1"/>
</dbReference>
<feature type="chain" id="PRO_1000058279" description="Queuine tRNA-ribosyltransferase">
    <location>
        <begin position="1"/>
        <end position="392"/>
    </location>
</feature>
<feature type="region of interest" description="RNA binding" evidence="1">
    <location>
        <begin position="247"/>
        <end position="253"/>
    </location>
</feature>
<feature type="region of interest" description="RNA binding; important for wobble base 34 recognition" evidence="1">
    <location>
        <begin position="271"/>
        <end position="275"/>
    </location>
</feature>
<feature type="active site" description="Proton acceptor" evidence="1">
    <location>
        <position position="93"/>
    </location>
</feature>
<feature type="active site" description="Nucleophile" evidence="1">
    <location>
        <position position="266"/>
    </location>
</feature>
<feature type="binding site" evidence="1">
    <location>
        <begin position="93"/>
        <end position="97"/>
    </location>
    <ligand>
        <name>substrate</name>
    </ligand>
</feature>
<feature type="binding site" evidence="1">
    <location>
        <position position="147"/>
    </location>
    <ligand>
        <name>substrate</name>
    </ligand>
</feature>
<feature type="binding site" evidence="1">
    <location>
        <position position="189"/>
    </location>
    <ligand>
        <name>substrate</name>
    </ligand>
</feature>
<feature type="binding site" evidence="1">
    <location>
        <position position="216"/>
    </location>
    <ligand>
        <name>substrate</name>
    </ligand>
</feature>
<feature type="binding site" evidence="1">
    <location>
        <position position="304"/>
    </location>
    <ligand>
        <name>Zn(2+)</name>
        <dbReference type="ChEBI" id="CHEBI:29105"/>
    </ligand>
</feature>
<feature type="binding site" evidence="1">
    <location>
        <position position="306"/>
    </location>
    <ligand>
        <name>Zn(2+)</name>
        <dbReference type="ChEBI" id="CHEBI:29105"/>
    </ligand>
</feature>
<feature type="binding site" evidence="1">
    <location>
        <position position="309"/>
    </location>
    <ligand>
        <name>Zn(2+)</name>
        <dbReference type="ChEBI" id="CHEBI:29105"/>
    </ligand>
</feature>
<feature type="binding site" evidence="1">
    <location>
        <position position="335"/>
    </location>
    <ligand>
        <name>Zn(2+)</name>
        <dbReference type="ChEBI" id="CHEBI:29105"/>
    </ligand>
</feature>
<organism>
    <name type="scientific">Dehalococcoides mccartyi (strain CBDB1)</name>
    <dbReference type="NCBI Taxonomy" id="255470"/>
    <lineage>
        <taxon>Bacteria</taxon>
        <taxon>Bacillati</taxon>
        <taxon>Chloroflexota</taxon>
        <taxon>Dehalococcoidia</taxon>
        <taxon>Dehalococcoidales</taxon>
        <taxon>Dehalococcoidaceae</taxon>
        <taxon>Dehalococcoides</taxon>
    </lineage>
</organism>
<evidence type="ECO:0000255" key="1">
    <source>
        <dbReference type="HAMAP-Rule" id="MF_00168"/>
    </source>
</evidence>
<reference key="1">
    <citation type="journal article" date="2005" name="Nat. Biotechnol.">
        <title>Genome sequence of the chlorinated compound-respiring bacterium Dehalococcoides species strain CBDB1.</title>
        <authorList>
            <person name="Kube M."/>
            <person name="Beck A."/>
            <person name="Zinder S.H."/>
            <person name="Kuhl H."/>
            <person name="Reinhardt R."/>
            <person name="Adrian L."/>
        </authorList>
    </citation>
    <scope>NUCLEOTIDE SEQUENCE [LARGE SCALE GENOMIC DNA]</scope>
    <source>
        <strain>CBDB1</strain>
    </source>
</reference>
<comment type="function">
    <text evidence="1">Catalyzes the base-exchange of a guanine (G) residue with the queuine precursor 7-aminomethyl-7-deazaguanine (PreQ1) at position 34 (anticodon wobble position) in tRNAs with GU(N) anticodons (tRNA-Asp, -Asn, -His and -Tyr). Catalysis occurs through a double-displacement mechanism. The nucleophile active site attacks the C1' of nucleotide 34 to detach the guanine base from the RNA, forming a covalent enzyme-RNA intermediate. The proton acceptor active site deprotonates the incoming PreQ1, allowing a nucleophilic attack on the C1' of the ribose to form the product. After dissociation, two additional enzymatic reactions on the tRNA convert PreQ1 to queuine (Q), resulting in the hypermodified nucleoside queuosine (7-(((4,5-cis-dihydroxy-2-cyclopenten-1-yl)amino)methyl)-7-deazaguanosine).</text>
</comment>
<comment type="catalytic activity">
    <reaction evidence="1">
        <text>7-aminomethyl-7-carbaguanine + guanosine(34) in tRNA = 7-aminomethyl-7-carbaguanosine(34) in tRNA + guanine</text>
        <dbReference type="Rhea" id="RHEA:24104"/>
        <dbReference type="Rhea" id="RHEA-COMP:10341"/>
        <dbReference type="Rhea" id="RHEA-COMP:10342"/>
        <dbReference type="ChEBI" id="CHEBI:16235"/>
        <dbReference type="ChEBI" id="CHEBI:58703"/>
        <dbReference type="ChEBI" id="CHEBI:74269"/>
        <dbReference type="ChEBI" id="CHEBI:82833"/>
        <dbReference type="EC" id="2.4.2.29"/>
    </reaction>
</comment>
<comment type="cofactor">
    <cofactor evidence="1">
        <name>Zn(2+)</name>
        <dbReference type="ChEBI" id="CHEBI:29105"/>
    </cofactor>
    <text evidence="1">Binds 1 zinc ion per subunit.</text>
</comment>
<comment type="pathway">
    <text evidence="1">tRNA modification; tRNA-queuosine biosynthesis.</text>
</comment>
<comment type="subunit">
    <text evidence="1">Homodimer. Within each dimer, one monomer is responsible for RNA recognition and catalysis, while the other monomer binds to the replacement base PreQ1.</text>
</comment>
<comment type="similarity">
    <text evidence="1">Belongs to the queuine tRNA-ribosyltransferase family.</text>
</comment>
<sequence>MDKSFILNKTSSRSLARRGQLFTAHGKVETPVFCPVGSQAAVKTLTPEDLKSVNINMILSNTYHLYLRPGIPIIKEMGGLHKFMNWDEVILTDSGGYQIFSLANLRKLDEGGVSFRSHIDGSTRYITPEDAVSFQQDLGSDIAMVLDECPHSEASENEVLAAMERTHQWAKRCLAAHTLKIQHLFAIVQGGLSPELRRQSAEYLASLDFPGYALGGLSLGEPKDITFETVRHTLRFLPENKPRYLMGVGAPEDLLEGVSCGVDIFDCVLPTRVARNGAFFSRLGRLNIRNAAFATQKGPIDPECNCYTCRNYSAAYLHHLFRCEEILAYRLATIHNIAFLSNLMQEIRTSIEKDCFEEFKADFLSRYQPTNEAIRIEQKQKWLFGRNGEPPS</sequence>
<keyword id="KW-0328">Glycosyltransferase</keyword>
<keyword id="KW-0479">Metal-binding</keyword>
<keyword id="KW-0671">Queuosine biosynthesis</keyword>
<keyword id="KW-0808">Transferase</keyword>
<keyword id="KW-0819">tRNA processing</keyword>
<keyword id="KW-0862">Zinc</keyword>
<protein>
    <recommendedName>
        <fullName evidence="1">Queuine tRNA-ribosyltransferase</fullName>
        <ecNumber evidence="1">2.4.2.29</ecNumber>
    </recommendedName>
    <alternativeName>
        <fullName evidence="1">Guanine insertion enzyme</fullName>
    </alternativeName>
    <alternativeName>
        <fullName evidence="1">tRNA-guanine transglycosylase</fullName>
    </alternativeName>
</protein>
<name>TGT_DEHMC</name>
<proteinExistence type="inferred from homology"/>